<proteinExistence type="inferred from homology"/>
<dbReference type="EC" id="2.6.1.83" evidence="1"/>
<dbReference type="EMBL" id="CP000551">
    <property type="protein sequence ID" value="ABM70986.1"/>
    <property type="molecule type" value="Genomic_DNA"/>
</dbReference>
<dbReference type="RefSeq" id="WP_011819114.1">
    <property type="nucleotide sequence ID" value="NC_008816.1"/>
</dbReference>
<dbReference type="SMR" id="A2BT75"/>
<dbReference type="STRING" id="146891.A9601_17031"/>
<dbReference type="KEGG" id="pmb:A9601_17031"/>
<dbReference type="eggNOG" id="COG0436">
    <property type="taxonomic scope" value="Bacteria"/>
</dbReference>
<dbReference type="HOGENOM" id="CLU_051433_0_0_3"/>
<dbReference type="OrthoDB" id="9802328at2"/>
<dbReference type="UniPathway" id="UPA00034">
    <property type="reaction ID" value="UER00466"/>
</dbReference>
<dbReference type="Proteomes" id="UP000002590">
    <property type="component" value="Chromosome"/>
</dbReference>
<dbReference type="GO" id="GO:0010285">
    <property type="term" value="F:L,L-diaminopimelate aminotransferase activity"/>
    <property type="evidence" value="ECO:0007669"/>
    <property type="project" value="UniProtKB-UniRule"/>
</dbReference>
<dbReference type="GO" id="GO:0030170">
    <property type="term" value="F:pyridoxal phosphate binding"/>
    <property type="evidence" value="ECO:0007669"/>
    <property type="project" value="UniProtKB-UniRule"/>
</dbReference>
<dbReference type="GO" id="GO:0033362">
    <property type="term" value="P:lysine biosynthetic process via diaminopimelate, diaminopimelate-aminotransferase pathway"/>
    <property type="evidence" value="ECO:0007669"/>
    <property type="project" value="UniProtKB-UniRule"/>
</dbReference>
<dbReference type="CDD" id="cd00609">
    <property type="entry name" value="AAT_like"/>
    <property type="match status" value="1"/>
</dbReference>
<dbReference type="FunFam" id="3.40.640.10:FF:000099">
    <property type="entry name" value="LL-diaminopimelate aminotransferase, chloroplastic"/>
    <property type="match status" value="1"/>
</dbReference>
<dbReference type="Gene3D" id="3.90.1150.10">
    <property type="entry name" value="Aspartate Aminotransferase, domain 1"/>
    <property type="match status" value="1"/>
</dbReference>
<dbReference type="Gene3D" id="3.40.640.10">
    <property type="entry name" value="Type I PLP-dependent aspartate aminotransferase-like (Major domain)"/>
    <property type="match status" value="1"/>
</dbReference>
<dbReference type="HAMAP" id="MF_01642">
    <property type="entry name" value="DapL_aminotrans_1"/>
    <property type="match status" value="1"/>
</dbReference>
<dbReference type="InterPro" id="IPR004839">
    <property type="entry name" value="Aminotransferase_I/II_large"/>
</dbReference>
<dbReference type="InterPro" id="IPR019942">
    <property type="entry name" value="DapL/ALD1"/>
</dbReference>
<dbReference type="InterPro" id="IPR015424">
    <property type="entry name" value="PyrdxlP-dep_Trfase"/>
</dbReference>
<dbReference type="InterPro" id="IPR015421">
    <property type="entry name" value="PyrdxlP-dep_Trfase_major"/>
</dbReference>
<dbReference type="InterPro" id="IPR015422">
    <property type="entry name" value="PyrdxlP-dep_Trfase_small"/>
</dbReference>
<dbReference type="NCBIfam" id="TIGR03542">
    <property type="entry name" value="DAPAT_plant"/>
    <property type="match status" value="1"/>
</dbReference>
<dbReference type="PANTHER" id="PTHR43144">
    <property type="entry name" value="AMINOTRANSFERASE"/>
    <property type="match status" value="1"/>
</dbReference>
<dbReference type="Pfam" id="PF00155">
    <property type="entry name" value="Aminotran_1_2"/>
    <property type="match status" value="1"/>
</dbReference>
<dbReference type="SUPFAM" id="SSF53383">
    <property type="entry name" value="PLP-dependent transferases"/>
    <property type="match status" value="1"/>
</dbReference>
<reference key="1">
    <citation type="journal article" date="2007" name="PLoS Genet.">
        <title>Patterns and implications of gene gain and loss in the evolution of Prochlorococcus.</title>
        <authorList>
            <person name="Kettler G.C."/>
            <person name="Martiny A.C."/>
            <person name="Huang K."/>
            <person name="Zucker J."/>
            <person name="Coleman M.L."/>
            <person name="Rodrigue S."/>
            <person name="Chen F."/>
            <person name="Lapidus A."/>
            <person name="Ferriera S."/>
            <person name="Johnson J."/>
            <person name="Steglich C."/>
            <person name="Church G.M."/>
            <person name="Richardson P."/>
            <person name="Chisholm S.W."/>
        </authorList>
    </citation>
    <scope>NUCLEOTIDE SEQUENCE [LARGE SCALE GENOMIC DNA]</scope>
    <source>
        <strain>AS9601</strain>
    </source>
</reference>
<sequence>MVQVNENYLKLKAGYLFPEIAKRVKLYSQSNKNAEIIKLGIGDVTEPLPRACIEAMGKALDDMGTTDGFRGYGPEQGYAWLREKISEHDFISRGCQISPEEIFVSDGSKCDSSNILDILGKDNSIAVTDPVYPVYVDSNVMTGRTGDALENGTYQGLTYLAINEANNFLPELPEKKVDILYLCFPNNPTGATINKEELKKWVDYALQNKSLILFDAAYEAFIQDNDIPHSIYEIEGAKDCAIEFRSFSKNAGFTGVRCAFTVIPKNLKGLSSTNEEIELWPLWNRRQSTKFNGVSYVVQKGAEAVYSLEGKKQVRGLIDFYMENAKIMKNKLQNSGYKVYGGDNAPYIWIKVPDQMTSWDFFDFLLQKVSVVGTPGSGFGLAGEGYFRLSAFNSRSNVIDAMERIINI</sequence>
<feature type="chain" id="PRO_0000312534" description="LL-diaminopimelate aminotransferase">
    <location>
        <begin position="1"/>
        <end position="408"/>
    </location>
</feature>
<feature type="binding site" evidence="1">
    <location>
        <position position="15"/>
    </location>
    <ligand>
        <name>substrate</name>
    </ligand>
</feature>
<feature type="binding site" evidence="1">
    <location>
        <position position="42"/>
    </location>
    <ligand>
        <name>substrate</name>
    </ligand>
</feature>
<feature type="binding site" evidence="1">
    <location>
        <position position="72"/>
    </location>
    <ligand>
        <name>pyridoxal 5'-phosphate</name>
        <dbReference type="ChEBI" id="CHEBI:597326"/>
    </ligand>
</feature>
<feature type="binding site" evidence="1">
    <location>
        <begin position="108"/>
        <end position="109"/>
    </location>
    <ligand>
        <name>pyridoxal 5'-phosphate</name>
        <dbReference type="ChEBI" id="CHEBI:597326"/>
    </ligand>
</feature>
<feature type="binding site" evidence="1">
    <location>
        <position position="109"/>
    </location>
    <ligand>
        <name>substrate</name>
    </ligand>
</feature>
<feature type="binding site" evidence="1">
    <location>
        <position position="132"/>
    </location>
    <ligand>
        <name>pyridoxal 5'-phosphate</name>
        <dbReference type="ChEBI" id="CHEBI:597326"/>
    </ligand>
</feature>
<feature type="binding site" evidence="1">
    <location>
        <position position="132"/>
    </location>
    <ligand>
        <name>substrate</name>
    </ligand>
</feature>
<feature type="binding site" evidence="1">
    <location>
        <position position="187"/>
    </location>
    <ligand>
        <name>pyridoxal 5'-phosphate</name>
        <dbReference type="ChEBI" id="CHEBI:597326"/>
    </ligand>
</feature>
<feature type="binding site" evidence="1">
    <location>
        <position position="187"/>
    </location>
    <ligand>
        <name>substrate</name>
    </ligand>
</feature>
<feature type="binding site" evidence="1">
    <location>
        <position position="218"/>
    </location>
    <ligand>
        <name>pyridoxal 5'-phosphate</name>
        <dbReference type="ChEBI" id="CHEBI:597326"/>
    </ligand>
</feature>
<feature type="binding site" evidence="1">
    <location>
        <begin position="246"/>
        <end position="248"/>
    </location>
    <ligand>
        <name>pyridoxal 5'-phosphate</name>
        <dbReference type="ChEBI" id="CHEBI:597326"/>
    </ligand>
</feature>
<feature type="binding site" evidence="1">
    <location>
        <position position="257"/>
    </location>
    <ligand>
        <name>pyridoxal 5'-phosphate</name>
        <dbReference type="ChEBI" id="CHEBI:597326"/>
    </ligand>
</feature>
<feature type="binding site" evidence="1">
    <location>
        <position position="292"/>
    </location>
    <ligand>
        <name>pyridoxal 5'-phosphate</name>
        <dbReference type="ChEBI" id="CHEBI:597326"/>
    </ligand>
</feature>
<feature type="binding site" evidence="1">
    <location>
        <position position="292"/>
    </location>
    <ligand>
        <name>substrate</name>
    </ligand>
</feature>
<feature type="binding site" evidence="1">
    <location>
        <position position="388"/>
    </location>
    <ligand>
        <name>substrate</name>
    </ligand>
</feature>
<feature type="modified residue" description="N6-(pyridoxal phosphate)lysine" evidence="1">
    <location>
        <position position="249"/>
    </location>
</feature>
<comment type="function">
    <text evidence="1">Involved in the synthesis of meso-diaminopimelate (m-DAP or DL-DAP), required for both lysine and peptidoglycan biosynthesis. Catalyzes the direct conversion of tetrahydrodipicolinate to LL-diaminopimelate.</text>
</comment>
<comment type="catalytic activity">
    <reaction evidence="1">
        <text>(2S,6S)-2,6-diaminopimelate + 2-oxoglutarate = (S)-2,3,4,5-tetrahydrodipicolinate + L-glutamate + H2O + H(+)</text>
        <dbReference type="Rhea" id="RHEA:23988"/>
        <dbReference type="ChEBI" id="CHEBI:15377"/>
        <dbReference type="ChEBI" id="CHEBI:15378"/>
        <dbReference type="ChEBI" id="CHEBI:16810"/>
        <dbReference type="ChEBI" id="CHEBI:16845"/>
        <dbReference type="ChEBI" id="CHEBI:29985"/>
        <dbReference type="ChEBI" id="CHEBI:57609"/>
        <dbReference type="EC" id="2.6.1.83"/>
    </reaction>
</comment>
<comment type="cofactor">
    <cofactor evidence="1">
        <name>pyridoxal 5'-phosphate</name>
        <dbReference type="ChEBI" id="CHEBI:597326"/>
    </cofactor>
</comment>
<comment type="pathway">
    <text evidence="1">Amino-acid biosynthesis; L-lysine biosynthesis via DAP pathway; LL-2,6-diaminopimelate from (S)-tetrahydrodipicolinate (aminotransferase route): step 1/1.</text>
</comment>
<comment type="subunit">
    <text evidence="1">Homodimer.</text>
</comment>
<comment type="similarity">
    <text evidence="1">Belongs to the class-I pyridoxal-phosphate-dependent aminotransferase family. LL-diaminopimelate aminotransferase subfamily.</text>
</comment>
<accession>A2BT75</accession>
<name>DAPAT_PROMS</name>
<keyword id="KW-0032">Aminotransferase</keyword>
<keyword id="KW-0663">Pyridoxal phosphate</keyword>
<keyword id="KW-0808">Transferase</keyword>
<evidence type="ECO:0000255" key="1">
    <source>
        <dbReference type="HAMAP-Rule" id="MF_01642"/>
    </source>
</evidence>
<organism>
    <name type="scientific">Prochlorococcus marinus (strain AS9601)</name>
    <dbReference type="NCBI Taxonomy" id="146891"/>
    <lineage>
        <taxon>Bacteria</taxon>
        <taxon>Bacillati</taxon>
        <taxon>Cyanobacteriota</taxon>
        <taxon>Cyanophyceae</taxon>
        <taxon>Synechococcales</taxon>
        <taxon>Prochlorococcaceae</taxon>
        <taxon>Prochlorococcus</taxon>
    </lineage>
</organism>
<gene>
    <name evidence="1" type="primary">dapL</name>
    <name type="ordered locus">A9601_17031</name>
</gene>
<protein>
    <recommendedName>
        <fullName evidence="1">LL-diaminopimelate aminotransferase</fullName>
        <shortName evidence="1">DAP-AT</shortName>
        <shortName evidence="1">DAP-aminotransferase</shortName>
        <shortName evidence="1">LL-DAP-aminotransferase</shortName>
        <ecNumber evidence="1">2.6.1.83</ecNumber>
    </recommendedName>
</protein>